<name>RECA_THEVB</name>
<proteinExistence type="inferred from homology"/>
<feature type="chain" id="PRO_0000122873" description="Protein RecA">
    <location>
        <begin position="1"/>
        <end position="355"/>
    </location>
</feature>
<feature type="binding site" evidence="1">
    <location>
        <begin position="72"/>
        <end position="79"/>
    </location>
    <ligand>
        <name>ATP</name>
        <dbReference type="ChEBI" id="CHEBI:30616"/>
    </ligand>
</feature>
<dbReference type="EMBL" id="BA000039">
    <property type="protein sequence ID" value="BAC09641.1"/>
    <property type="molecule type" value="Genomic_DNA"/>
</dbReference>
<dbReference type="RefSeq" id="NP_682879.1">
    <property type="nucleotide sequence ID" value="NC_004113.1"/>
</dbReference>
<dbReference type="RefSeq" id="WP_011057924.1">
    <property type="nucleotide sequence ID" value="NC_004113.1"/>
</dbReference>
<dbReference type="SMR" id="Q8DH70"/>
<dbReference type="STRING" id="197221.gene:10748699"/>
<dbReference type="EnsemblBacteria" id="BAC09641">
    <property type="protein sequence ID" value="BAC09641"/>
    <property type="gene ID" value="BAC09641"/>
</dbReference>
<dbReference type="KEGG" id="tel:tlr2089"/>
<dbReference type="PATRIC" id="fig|197221.4.peg.2187"/>
<dbReference type="eggNOG" id="COG0468">
    <property type="taxonomic scope" value="Bacteria"/>
</dbReference>
<dbReference type="Proteomes" id="UP000000440">
    <property type="component" value="Chromosome"/>
</dbReference>
<dbReference type="GO" id="GO:0005829">
    <property type="term" value="C:cytosol"/>
    <property type="evidence" value="ECO:0007669"/>
    <property type="project" value="TreeGrafter"/>
</dbReference>
<dbReference type="GO" id="GO:0005524">
    <property type="term" value="F:ATP binding"/>
    <property type="evidence" value="ECO:0007669"/>
    <property type="project" value="UniProtKB-UniRule"/>
</dbReference>
<dbReference type="GO" id="GO:0016887">
    <property type="term" value="F:ATP hydrolysis activity"/>
    <property type="evidence" value="ECO:0007669"/>
    <property type="project" value="InterPro"/>
</dbReference>
<dbReference type="GO" id="GO:0140664">
    <property type="term" value="F:ATP-dependent DNA damage sensor activity"/>
    <property type="evidence" value="ECO:0007669"/>
    <property type="project" value="InterPro"/>
</dbReference>
<dbReference type="GO" id="GO:0003684">
    <property type="term" value="F:damaged DNA binding"/>
    <property type="evidence" value="ECO:0007669"/>
    <property type="project" value="UniProtKB-UniRule"/>
</dbReference>
<dbReference type="GO" id="GO:0003697">
    <property type="term" value="F:single-stranded DNA binding"/>
    <property type="evidence" value="ECO:0007669"/>
    <property type="project" value="UniProtKB-UniRule"/>
</dbReference>
<dbReference type="GO" id="GO:0006310">
    <property type="term" value="P:DNA recombination"/>
    <property type="evidence" value="ECO:0007669"/>
    <property type="project" value="UniProtKB-UniRule"/>
</dbReference>
<dbReference type="GO" id="GO:0006281">
    <property type="term" value="P:DNA repair"/>
    <property type="evidence" value="ECO:0007669"/>
    <property type="project" value="UniProtKB-UniRule"/>
</dbReference>
<dbReference type="GO" id="GO:0009432">
    <property type="term" value="P:SOS response"/>
    <property type="evidence" value="ECO:0007669"/>
    <property type="project" value="UniProtKB-UniRule"/>
</dbReference>
<dbReference type="CDD" id="cd00983">
    <property type="entry name" value="RecA"/>
    <property type="match status" value="1"/>
</dbReference>
<dbReference type="FunFam" id="3.40.50.300:FF:000087">
    <property type="entry name" value="Recombinase RecA"/>
    <property type="match status" value="1"/>
</dbReference>
<dbReference type="Gene3D" id="3.40.50.300">
    <property type="entry name" value="P-loop containing nucleotide triphosphate hydrolases"/>
    <property type="match status" value="1"/>
</dbReference>
<dbReference type="HAMAP" id="MF_00268">
    <property type="entry name" value="RecA"/>
    <property type="match status" value="1"/>
</dbReference>
<dbReference type="InterPro" id="IPR003593">
    <property type="entry name" value="AAA+_ATPase"/>
</dbReference>
<dbReference type="InterPro" id="IPR013765">
    <property type="entry name" value="DNA_recomb/repair_RecA"/>
</dbReference>
<dbReference type="InterPro" id="IPR020584">
    <property type="entry name" value="DNA_recomb/repair_RecA_CS"/>
</dbReference>
<dbReference type="InterPro" id="IPR027417">
    <property type="entry name" value="P-loop_NTPase"/>
</dbReference>
<dbReference type="InterPro" id="IPR049261">
    <property type="entry name" value="RecA-like_C"/>
</dbReference>
<dbReference type="InterPro" id="IPR049428">
    <property type="entry name" value="RecA-like_N"/>
</dbReference>
<dbReference type="InterPro" id="IPR020588">
    <property type="entry name" value="RecA_ATP-bd"/>
</dbReference>
<dbReference type="InterPro" id="IPR023400">
    <property type="entry name" value="RecA_C_sf"/>
</dbReference>
<dbReference type="InterPro" id="IPR020587">
    <property type="entry name" value="RecA_monomer-monomer_interface"/>
</dbReference>
<dbReference type="NCBIfam" id="TIGR02012">
    <property type="entry name" value="tigrfam_recA"/>
    <property type="match status" value="1"/>
</dbReference>
<dbReference type="PANTHER" id="PTHR45900:SF1">
    <property type="entry name" value="MITOCHONDRIAL DNA REPAIR PROTEIN RECA HOMOLOG-RELATED"/>
    <property type="match status" value="1"/>
</dbReference>
<dbReference type="PANTHER" id="PTHR45900">
    <property type="entry name" value="RECA"/>
    <property type="match status" value="1"/>
</dbReference>
<dbReference type="Pfam" id="PF00154">
    <property type="entry name" value="RecA"/>
    <property type="match status" value="1"/>
</dbReference>
<dbReference type="Pfam" id="PF21096">
    <property type="entry name" value="RecA_C"/>
    <property type="match status" value="1"/>
</dbReference>
<dbReference type="PRINTS" id="PR00142">
    <property type="entry name" value="RECA"/>
</dbReference>
<dbReference type="SMART" id="SM00382">
    <property type="entry name" value="AAA"/>
    <property type="match status" value="1"/>
</dbReference>
<dbReference type="SUPFAM" id="SSF52540">
    <property type="entry name" value="P-loop containing nucleoside triphosphate hydrolases"/>
    <property type="match status" value="1"/>
</dbReference>
<dbReference type="SUPFAM" id="SSF54752">
    <property type="entry name" value="RecA protein, C-terminal domain"/>
    <property type="match status" value="1"/>
</dbReference>
<dbReference type="PROSITE" id="PS00321">
    <property type="entry name" value="RECA_1"/>
    <property type="match status" value="1"/>
</dbReference>
<dbReference type="PROSITE" id="PS50162">
    <property type="entry name" value="RECA_2"/>
    <property type="match status" value="1"/>
</dbReference>
<dbReference type="PROSITE" id="PS50163">
    <property type="entry name" value="RECA_3"/>
    <property type="match status" value="1"/>
</dbReference>
<sequence>MSDTTLSLLSPEKRKALEFAISQIERSFGKGSIMRLGDATSMKVETISSGALTLDLALGGGLPKGRIIEIYGPESSGKTTLALHAIAEVQKAGGVAAFVDAEHALDPTYAAALRVDIQNLLVAQPDTGEAALEIVDQLVRSTAVDIIVVDSVAALVPRAEIEGDMGESHVGLQARLMSQALRKINGNISKTGCTVIFLNQLRQKIGLTYGNPETTTGGVALKFYASVRLDIRRVQTLKKGTEEFGIRAKVKVAKNKVAPPFRIAEFDIIFGKGIANLGCILDMAEEVGVITRKGAWYSYNGENLAQGRDNTINYMEENPSFAQEIEQQVRQRFDQRVALSANTAAYTEEEIGEGE</sequence>
<reference key="1">
    <citation type="journal article" date="2002" name="DNA Res.">
        <title>Complete genome structure of the thermophilic cyanobacterium Thermosynechococcus elongatus BP-1.</title>
        <authorList>
            <person name="Nakamura Y."/>
            <person name="Kaneko T."/>
            <person name="Sato S."/>
            <person name="Ikeuchi M."/>
            <person name="Katoh H."/>
            <person name="Sasamoto S."/>
            <person name="Watanabe A."/>
            <person name="Iriguchi M."/>
            <person name="Kawashima K."/>
            <person name="Kimura T."/>
            <person name="Kishida Y."/>
            <person name="Kiyokawa C."/>
            <person name="Kohara M."/>
            <person name="Matsumoto M."/>
            <person name="Matsuno A."/>
            <person name="Nakazaki N."/>
            <person name="Shimpo S."/>
            <person name="Sugimoto M."/>
            <person name="Takeuchi C."/>
            <person name="Yamada M."/>
            <person name="Tabata S."/>
        </authorList>
    </citation>
    <scope>NUCLEOTIDE SEQUENCE [LARGE SCALE GENOMIC DNA]</scope>
    <source>
        <strain>NIES-2133 / IAM M-273 / BP-1</strain>
    </source>
</reference>
<protein>
    <recommendedName>
        <fullName evidence="1">Protein RecA</fullName>
    </recommendedName>
    <alternativeName>
        <fullName evidence="1">Recombinase A</fullName>
    </alternativeName>
</protein>
<accession>Q8DH70</accession>
<organism>
    <name type="scientific">Thermosynechococcus vestitus (strain NIES-2133 / IAM M-273 / BP-1)</name>
    <dbReference type="NCBI Taxonomy" id="197221"/>
    <lineage>
        <taxon>Bacteria</taxon>
        <taxon>Bacillati</taxon>
        <taxon>Cyanobacteriota</taxon>
        <taxon>Cyanophyceae</taxon>
        <taxon>Acaryochloridales</taxon>
        <taxon>Thermosynechococcaceae</taxon>
        <taxon>Thermosynechococcus</taxon>
    </lineage>
</organism>
<evidence type="ECO:0000255" key="1">
    <source>
        <dbReference type="HAMAP-Rule" id="MF_00268"/>
    </source>
</evidence>
<comment type="function">
    <text evidence="1">Can catalyze the hydrolysis of ATP in the presence of single-stranded DNA, the ATP-dependent uptake of single-stranded DNA by duplex DNA, and the ATP-dependent hybridization of homologous single-stranded DNAs. It interacts with LexA causing its activation and leading to its autocatalytic cleavage.</text>
</comment>
<comment type="subcellular location">
    <subcellularLocation>
        <location evidence="1">Cytoplasm</location>
    </subcellularLocation>
</comment>
<comment type="similarity">
    <text evidence="1">Belongs to the RecA family.</text>
</comment>
<gene>
    <name evidence="1" type="primary">recA</name>
    <name type="ordered locus">tlr2089</name>
</gene>
<keyword id="KW-0067">ATP-binding</keyword>
<keyword id="KW-0963">Cytoplasm</keyword>
<keyword id="KW-0227">DNA damage</keyword>
<keyword id="KW-0233">DNA recombination</keyword>
<keyword id="KW-0234">DNA repair</keyword>
<keyword id="KW-0238">DNA-binding</keyword>
<keyword id="KW-0547">Nucleotide-binding</keyword>
<keyword id="KW-1185">Reference proteome</keyword>
<keyword id="KW-0742">SOS response</keyword>